<name>PROA_STRPS</name>
<proteinExistence type="inferred from homology"/>
<keyword id="KW-0028">Amino-acid biosynthesis</keyword>
<keyword id="KW-0963">Cytoplasm</keyword>
<keyword id="KW-0521">NADP</keyword>
<keyword id="KW-0560">Oxidoreductase</keyword>
<keyword id="KW-0641">Proline biosynthesis</keyword>
<reference key="1">
    <citation type="journal article" date="2009" name="BMC Genomics">
        <title>Genome evolution driven by host adaptations results in a more virulent and antimicrobial-resistant Streptococcus pneumoniae serotype 14.</title>
        <authorList>
            <person name="Ding F."/>
            <person name="Tang P."/>
            <person name="Hsu M.-H."/>
            <person name="Cui P."/>
            <person name="Hu S."/>
            <person name="Yu J."/>
            <person name="Chiu C.-H."/>
        </authorList>
    </citation>
    <scope>NUCLEOTIDE SEQUENCE [LARGE SCALE GENOMIC DNA]</scope>
    <source>
        <strain>CGSP14</strain>
    </source>
</reference>
<protein>
    <recommendedName>
        <fullName evidence="1">Gamma-glutamyl phosphate reductase</fullName>
        <shortName evidence="1">GPR</shortName>
        <ecNumber evidence="1">1.2.1.41</ecNumber>
    </recommendedName>
    <alternativeName>
        <fullName evidence="1">Glutamate-5-semialdehyde dehydrogenase</fullName>
    </alternativeName>
    <alternativeName>
        <fullName evidence="1">Glutamyl-gamma-semialdehyde dehydrogenase</fullName>
        <shortName evidence="1">GSA dehydrogenase</shortName>
    </alternativeName>
</protein>
<comment type="function">
    <text evidence="1">Catalyzes the NADPH-dependent reduction of L-glutamate 5-phosphate into L-glutamate 5-semialdehyde and phosphate. The product spontaneously undergoes cyclization to form 1-pyrroline-5-carboxylate.</text>
</comment>
<comment type="catalytic activity">
    <reaction evidence="1">
        <text>L-glutamate 5-semialdehyde + phosphate + NADP(+) = L-glutamyl 5-phosphate + NADPH + H(+)</text>
        <dbReference type="Rhea" id="RHEA:19541"/>
        <dbReference type="ChEBI" id="CHEBI:15378"/>
        <dbReference type="ChEBI" id="CHEBI:43474"/>
        <dbReference type="ChEBI" id="CHEBI:57783"/>
        <dbReference type="ChEBI" id="CHEBI:58066"/>
        <dbReference type="ChEBI" id="CHEBI:58274"/>
        <dbReference type="ChEBI" id="CHEBI:58349"/>
        <dbReference type="EC" id="1.2.1.41"/>
    </reaction>
</comment>
<comment type="pathway">
    <text evidence="1">Amino-acid biosynthesis; L-proline biosynthesis; L-glutamate 5-semialdehyde from L-glutamate: step 2/2.</text>
</comment>
<comment type="subcellular location">
    <subcellularLocation>
        <location evidence="1">Cytoplasm</location>
    </subcellularLocation>
</comment>
<comment type="similarity">
    <text evidence="1">Belongs to the gamma-glutamyl phosphate reductase family.</text>
</comment>
<accession>B2IP88</accession>
<evidence type="ECO:0000255" key="1">
    <source>
        <dbReference type="HAMAP-Rule" id="MF_00412"/>
    </source>
</evidence>
<dbReference type="EC" id="1.2.1.41" evidence="1"/>
<dbReference type="EMBL" id="CP001033">
    <property type="protein sequence ID" value="ACB90159.1"/>
    <property type="molecule type" value="Genomic_DNA"/>
</dbReference>
<dbReference type="RefSeq" id="WP_000254675.1">
    <property type="nucleotide sequence ID" value="NC_010582.1"/>
</dbReference>
<dbReference type="SMR" id="B2IP88"/>
<dbReference type="KEGG" id="spw:SPCG_0907"/>
<dbReference type="HOGENOM" id="CLU_030231_0_0_9"/>
<dbReference type="UniPathway" id="UPA00098">
    <property type="reaction ID" value="UER00360"/>
</dbReference>
<dbReference type="GO" id="GO:0005737">
    <property type="term" value="C:cytoplasm"/>
    <property type="evidence" value="ECO:0007669"/>
    <property type="project" value="UniProtKB-SubCell"/>
</dbReference>
<dbReference type="GO" id="GO:0004350">
    <property type="term" value="F:glutamate-5-semialdehyde dehydrogenase activity"/>
    <property type="evidence" value="ECO:0007669"/>
    <property type="project" value="UniProtKB-UniRule"/>
</dbReference>
<dbReference type="GO" id="GO:0050661">
    <property type="term" value="F:NADP binding"/>
    <property type="evidence" value="ECO:0007669"/>
    <property type="project" value="InterPro"/>
</dbReference>
<dbReference type="GO" id="GO:0055129">
    <property type="term" value="P:L-proline biosynthetic process"/>
    <property type="evidence" value="ECO:0007669"/>
    <property type="project" value="UniProtKB-UniRule"/>
</dbReference>
<dbReference type="CDD" id="cd07079">
    <property type="entry name" value="ALDH_F18-19_ProA-GPR"/>
    <property type="match status" value="1"/>
</dbReference>
<dbReference type="FunFam" id="3.40.309.10:FF:000006">
    <property type="entry name" value="Gamma-glutamyl phosphate reductase"/>
    <property type="match status" value="1"/>
</dbReference>
<dbReference type="Gene3D" id="3.40.605.10">
    <property type="entry name" value="Aldehyde Dehydrogenase, Chain A, domain 1"/>
    <property type="match status" value="1"/>
</dbReference>
<dbReference type="Gene3D" id="3.40.309.10">
    <property type="entry name" value="Aldehyde Dehydrogenase, Chain A, domain 2"/>
    <property type="match status" value="1"/>
</dbReference>
<dbReference type="HAMAP" id="MF_00412">
    <property type="entry name" value="ProA"/>
    <property type="match status" value="1"/>
</dbReference>
<dbReference type="InterPro" id="IPR016161">
    <property type="entry name" value="Ald_DH/histidinol_DH"/>
</dbReference>
<dbReference type="InterPro" id="IPR016163">
    <property type="entry name" value="Ald_DH_C"/>
</dbReference>
<dbReference type="InterPro" id="IPR016162">
    <property type="entry name" value="Ald_DH_N"/>
</dbReference>
<dbReference type="InterPro" id="IPR015590">
    <property type="entry name" value="Aldehyde_DH_dom"/>
</dbReference>
<dbReference type="InterPro" id="IPR020593">
    <property type="entry name" value="G-glutamylP_reductase_CS"/>
</dbReference>
<dbReference type="InterPro" id="IPR012134">
    <property type="entry name" value="Glu-5-SA_DH"/>
</dbReference>
<dbReference type="InterPro" id="IPR000965">
    <property type="entry name" value="GPR_dom"/>
</dbReference>
<dbReference type="NCBIfam" id="NF001221">
    <property type="entry name" value="PRK00197.1"/>
    <property type="match status" value="1"/>
</dbReference>
<dbReference type="NCBIfam" id="TIGR00407">
    <property type="entry name" value="proA"/>
    <property type="match status" value="1"/>
</dbReference>
<dbReference type="PANTHER" id="PTHR11063:SF8">
    <property type="entry name" value="DELTA-1-PYRROLINE-5-CARBOXYLATE SYNTHASE"/>
    <property type="match status" value="1"/>
</dbReference>
<dbReference type="PANTHER" id="PTHR11063">
    <property type="entry name" value="GLUTAMATE SEMIALDEHYDE DEHYDROGENASE"/>
    <property type="match status" value="1"/>
</dbReference>
<dbReference type="Pfam" id="PF00171">
    <property type="entry name" value="Aldedh"/>
    <property type="match status" value="1"/>
</dbReference>
<dbReference type="PIRSF" id="PIRSF000151">
    <property type="entry name" value="GPR"/>
    <property type="match status" value="1"/>
</dbReference>
<dbReference type="SUPFAM" id="SSF53720">
    <property type="entry name" value="ALDH-like"/>
    <property type="match status" value="1"/>
</dbReference>
<dbReference type="PROSITE" id="PS01223">
    <property type="entry name" value="PROA"/>
    <property type="match status" value="1"/>
</dbReference>
<sequence length="420" mass="45207">MVSRQEQFEQVQAVKKSINTASEEVKNQALLAMADHLVAATEEILAANALDMAAAKGKISDVMLDRLYLDADRIEAMARGIREVVALPDPIGEVLETSQLENGLVITKKRVAIGVIGIIYESRPNVTSDAAALTLKSGNAVVLRSGKDAYQTTHAIVTALKKGLETTTIHPNVIQLVEDTSRESSYAMMKAKGYLDLLIPRGGAGLINAVVENAIVPVIETGTGIVHVYVDKDADEDKALSIINNAKTSRPSVCNAMEVLLVHENKAASILPRLDQMLVAERKEAGLEPIQFRLDSKASQFVSGQAAETQDFDTEFLDYVLAVKVVSSLEEAVAHIESHSTHHSDAIVTENAEAAAYFTDQVDSAAVYVNASTRFTDGGQFGLGCEMGISTQKLHARGPMGLKELTSYKYVVAGDGQIRE</sequence>
<gene>
    <name evidence="1" type="primary">proA</name>
    <name type="ordered locus">SPCG_0907</name>
</gene>
<organism>
    <name type="scientific">Streptococcus pneumoniae (strain CGSP14)</name>
    <dbReference type="NCBI Taxonomy" id="516950"/>
    <lineage>
        <taxon>Bacteria</taxon>
        <taxon>Bacillati</taxon>
        <taxon>Bacillota</taxon>
        <taxon>Bacilli</taxon>
        <taxon>Lactobacillales</taxon>
        <taxon>Streptococcaceae</taxon>
        <taxon>Streptococcus</taxon>
    </lineage>
</organism>
<feature type="chain" id="PRO_1000193658" description="Gamma-glutamyl phosphate reductase">
    <location>
        <begin position="1"/>
        <end position="420"/>
    </location>
</feature>